<comment type="function">
    <text evidence="9">Receptor for thromboxane A2 (TXA2), a potent stimulator of platelet aggregation. The activity of this receptor is mediated by a G-protein that activates a phosphatidylinositol-calcium second messenger system. In the kidney, the binding of TXA2 to glomerular TP receptors causes intense vasoconstriction. Activates phospholipase C.</text>
</comment>
<comment type="function">
    <molecule>Isoform 1</molecule>
    <text evidence="9">Activates adenylyl cyclase.</text>
</comment>
<comment type="function">
    <molecule>Isoform 2</molecule>
    <text evidence="9">Inhibits adenylyl cyclase.</text>
</comment>
<comment type="subunit">
    <text evidence="4 5 6">Interacts with RPGRIP1L. Interacts with PSMA3. Interacts with RACK1; the interaction regulates TBXA2R cell surface expression.</text>
</comment>
<comment type="interaction">
    <interactant intactId="EBI-2625082">
        <id>P21731</id>
    </interactant>
    <interactant intactId="EBI-2211957">
        <id>Q13162</id>
        <label>PRDX4</label>
    </interactant>
    <organismsDiffer>false</organismsDiffer>
    <experiments>3</experiments>
</comment>
<comment type="interaction">
    <interactant intactId="EBI-15885629">
        <id>P21731-3</id>
    </interactant>
    <interactant intactId="EBI-15861807">
        <id>Q12791-5</id>
        <label>KCNMA1</label>
    </interactant>
    <organismsDiffer>false</organismsDiffer>
    <experiments>7</experiments>
</comment>
<comment type="subcellular location">
    <subcellularLocation>
        <location>Cell membrane</location>
        <topology>Multi-pass membrane protein</topology>
    </subcellularLocation>
</comment>
<comment type="alternative products">
    <event type="alternative splicing"/>
    <isoform>
        <id>P21731-3</id>
        <name>1</name>
        <name>Alpha</name>
        <name evidence="10">Placenta receptor</name>
        <sequence type="displayed"/>
    </isoform>
    <isoform>
        <id>P21731-2</id>
        <name>2</name>
        <name>Beta</name>
        <name evidence="10">Endothelial receptor</name>
        <sequence type="described" ref="VSP_001925"/>
    </isoform>
</comment>
<comment type="disease" evidence="7 9">
    <disease id="DI-03258">
        <name>Bleeding disorder, platelet-type, 13</name>
        <acronym>BDPLT13</acronym>
        <description>A disorder characterized by reduced platelet aggregation and a tendency to mild mucocutaneous bleeding.</description>
        <dbReference type="MIM" id="614009"/>
    </disease>
    <text>Disease susceptibility is associated with variants affecting the gene represented in this entry.</text>
</comment>
<comment type="similarity">
    <text evidence="3">Belongs to the G-protein coupled receptor 1 family.</text>
</comment>
<comment type="sequence caution" evidence="12">
    <molecule>Isoform 2</molecule>
    <conflict type="frameshift">
        <sequence resource="EMBL-CDS" id="AAA58957"/>
    </conflict>
</comment>
<evidence type="ECO:0000250" key="1">
    <source>
        <dbReference type="UniProtKB" id="P30987"/>
    </source>
</evidence>
<evidence type="ECO:0000255" key="2"/>
<evidence type="ECO:0000255" key="3">
    <source>
        <dbReference type="PROSITE-ProRule" id="PRU00521"/>
    </source>
</evidence>
<evidence type="ECO:0000269" key="4">
    <source>
    </source>
</evidence>
<evidence type="ECO:0000269" key="5">
    <source>
    </source>
</evidence>
<evidence type="ECO:0000269" key="6">
    <source>
    </source>
</evidence>
<evidence type="ECO:0000269" key="7">
    <source>
    </source>
</evidence>
<evidence type="ECO:0000269" key="8">
    <source>
    </source>
</evidence>
<evidence type="ECO:0000269" key="9">
    <source>
    </source>
</evidence>
<evidence type="ECO:0000303" key="10">
    <source>
    </source>
</evidence>
<evidence type="ECO:0000303" key="11">
    <source>
    </source>
</evidence>
<evidence type="ECO:0000305" key="12"/>
<evidence type="ECO:0007744" key="13">
    <source>
    </source>
</evidence>
<evidence type="ECO:0007829" key="14">
    <source>
        <dbReference type="PDB" id="8XJO"/>
    </source>
</evidence>
<gene>
    <name type="primary">TBXA2R</name>
</gene>
<proteinExistence type="evidence at protein level"/>
<organism>
    <name type="scientific">Homo sapiens</name>
    <name type="common">Human</name>
    <dbReference type="NCBI Taxonomy" id="9606"/>
    <lineage>
        <taxon>Eukaryota</taxon>
        <taxon>Metazoa</taxon>
        <taxon>Chordata</taxon>
        <taxon>Craniata</taxon>
        <taxon>Vertebrata</taxon>
        <taxon>Euteleostomi</taxon>
        <taxon>Mammalia</taxon>
        <taxon>Eutheria</taxon>
        <taxon>Euarchontoglires</taxon>
        <taxon>Primates</taxon>
        <taxon>Haplorrhini</taxon>
        <taxon>Catarrhini</taxon>
        <taxon>Hominidae</taxon>
        <taxon>Homo</taxon>
    </lineage>
</organism>
<feature type="chain" id="PRO_0000070138" description="Thromboxane A2 receptor">
    <location>
        <begin position="1"/>
        <end position="343"/>
    </location>
</feature>
<feature type="topological domain" description="Extracellular" evidence="2">
    <location>
        <begin position="1"/>
        <end position="29"/>
    </location>
</feature>
<feature type="transmembrane region" description="Helical; Name=1" evidence="2">
    <location>
        <begin position="30"/>
        <end position="52"/>
    </location>
</feature>
<feature type="topological domain" description="Cytoplasmic" evidence="2">
    <location>
        <begin position="53"/>
        <end position="66"/>
    </location>
</feature>
<feature type="transmembrane region" description="Helical; Name=2" evidence="2">
    <location>
        <begin position="67"/>
        <end position="87"/>
    </location>
</feature>
<feature type="topological domain" description="Extracellular" evidence="2">
    <location>
        <begin position="88"/>
        <end position="106"/>
    </location>
</feature>
<feature type="transmembrane region" description="Helical; Name=3" evidence="2">
    <location>
        <begin position="107"/>
        <end position="128"/>
    </location>
</feature>
<feature type="topological domain" description="Cytoplasmic" evidence="2">
    <location>
        <begin position="129"/>
        <end position="149"/>
    </location>
</feature>
<feature type="transmembrane region" description="Helical; Name=4" evidence="2">
    <location>
        <begin position="150"/>
        <end position="172"/>
    </location>
</feature>
<feature type="topological domain" description="Extracellular" evidence="2">
    <location>
        <begin position="173"/>
        <end position="193"/>
    </location>
</feature>
<feature type="transmembrane region" description="Helical; Name=5" evidence="2">
    <location>
        <begin position="194"/>
        <end position="219"/>
    </location>
</feature>
<feature type="topological domain" description="Cytoplasmic" evidence="2">
    <location>
        <begin position="220"/>
        <end position="246"/>
    </location>
</feature>
<feature type="transmembrane region" description="Helical; Name=6" evidence="2">
    <location>
        <begin position="247"/>
        <end position="270"/>
    </location>
</feature>
<feature type="topological domain" description="Extracellular" evidence="2">
    <location>
        <begin position="271"/>
        <end position="289"/>
    </location>
</feature>
<feature type="transmembrane region" description="Helical; Name=7" evidence="2">
    <location>
        <begin position="290"/>
        <end position="311"/>
    </location>
</feature>
<feature type="topological domain" description="Cytoplasmic" evidence="2">
    <location>
        <begin position="312"/>
        <end position="343"/>
    </location>
</feature>
<feature type="modified residue" description="Phosphoserine" evidence="13">
    <location>
        <position position="329"/>
    </location>
</feature>
<feature type="modified residue" description="Phosphoserine" evidence="1">
    <location>
        <position position="331"/>
    </location>
</feature>
<feature type="glycosylation site" description="N-linked (GlcNAc...) asparagine">
    <location>
        <position position="4"/>
    </location>
</feature>
<feature type="glycosylation site" description="N-linked (GlcNAc...) asparagine">
    <location>
        <position position="16"/>
    </location>
</feature>
<feature type="disulfide bond" evidence="3">
    <location>
        <begin position="105"/>
        <end position="183"/>
    </location>
</feature>
<feature type="splice variant" id="VSP_001925" description="In isoform 2." evidence="10 11">
    <original>SLSLQPQLTQRSGLQ</original>
    <variation>RSLTLWPSLEYSGTISAHCNLRLPGSSDSRASASRAAGITGVSHCARPCMLFDPEFDLLAGVQLLPFEPPTGKALSRKD</variation>
    <location>
        <begin position="329"/>
        <end position="343"/>
    </location>
</feature>
<feature type="sequence variant" id="VAR_003515" description="In BDPLT13; does not affect TXA2 binding; defective interaction with G proteins; impairs phospholipase C and adenylyl cyclase activation; isoform 1; has no effect on adenylyl cyclase inhibition; isoform 2; dbSNP:rs34377097." evidence="7 9">
    <original>R</original>
    <variation>L</variation>
    <location>
        <position position="60"/>
    </location>
</feature>
<feature type="sequence variant" id="VAR_014688" description="In dbSNP:rs5743.">
    <original>C</original>
    <variation>S</variation>
    <location>
        <position position="68"/>
    </location>
</feature>
<feature type="sequence variant" id="VAR_014689" description="In dbSNP:rs5744.">
    <original>V</original>
    <variation>E</variation>
    <location>
        <position position="80"/>
    </location>
</feature>
<feature type="sequence variant" id="VAR_014690" description="In dbSNP:rs5746.">
    <original>E</original>
    <variation>V</variation>
    <location>
        <position position="94"/>
    </location>
</feature>
<feature type="sequence variant" id="VAR_014691" description="In dbSNP:rs5749.">
    <original>A</original>
    <variation>T</variation>
    <location>
        <position position="160"/>
    </location>
</feature>
<feature type="sequence variant" id="VAR_014692" description="In dbSNP:rs5750.">
    <original>V</original>
    <variation>E</variation>
    <location>
        <position position="176"/>
    </location>
</feature>
<feature type="sequence variant" id="VAR_014693" description="In dbSNP:rs5751.">
    <original>V</original>
    <variation>I</variation>
    <location>
        <position position="217"/>
    </location>
</feature>
<feature type="mutagenesis site" description="Suppresses antagonist binding." evidence="8">
    <original>L</original>
    <variation>R</variation>
    <location>
        <position position="291"/>
    </location>
</feature>
<feature type="mutagenesis site" description="Reduces antagonist binding." evidence="8">
    <original>R</original>
    <variation>Q</variation>
    <location>
        <position position="295"/>
    </location>
</feature>
<feature type="mutagenesis site" description="Reduces antagonist binding." evidence="8">
    <original>W</original>
    <variation>L</variation>
    <location>
        <position position="299"/>
    </location>
</feature>
<feature type="mutagenesis site" description="Reduces antagonist binding." evidence="8">
    <original>W</original>
    <variation>R</variation>
    <location>
        <position position="299"/>
    </location>
</feature>
<feature type="sequence conflict" description="In Ref. 1; AA sequence." evidence="12" ref="1">
    <original>V</original>
    <variation>W</variation>
    <location>
        <position position="263"/>
    </location>
</feature>
<feature type="turn" evidence="14">
    <location>
        <begin position="19"/>
        <end position="25"/>
    </location>
</feature>
<feature type="turn" evidence="14">
    <location>
        <begin position="28"/>
        <end position="32"/>
    </location>
</feature>
<feature type="helix" evidence="14">
    <location>
        <begin position="33"/>
        <end position="55"/>
    </location>
</feature>
<feature type="helix" evidence="14">
    <location>
        <begin position="63"/>
        <end position="90"/>
    </location>
</feature>
<feature type="helix" evidence="14">
    <location>
        <begin position="95"/>
        <end position="98"/>
    </location>
</feature>
<feature type="helix" evidence="14">
    <location>
        <begin position="104"/>
        <end position="135"/>
    </location>
</feature>
<feature type="turn" evidence="14">
    <location>
        <begin position="137"/>
        <end position="139"/>
    </location>
</feature>
<feature type="helix" evidence="14">
    <location>
        <begin position="146"/>
        <end position="164"/>
    </location>
</feature>
<feature type="helix" evidence="14">
    <location>
        <begin position="167"/>
        <end position="169"/>
    </location>
</feature>
<feature type="strand" evidence="14">
    <location>
        <begin position="174"/>
        <end position="176"/>
    </location>
</feature>
<feature type="strand" evidence="14">
    <location>
        <begin position="183"/>
        <end position="185"/>
    </location>
</feature>
<feature type="helix" evidence="14">
    <location>
        <begin position="191"/>
        <end position="226"/>
    </location>
</feature>
<feature type="helix" evidence="14">
    <location>
        <begin position="229"/>
        <end position="234"/>
    </location>
</feature>
<feature type="helix" evidence="14">
    <location>
        <begin position="239"/>
        <end position="269"/>
    </location>
</feature>
<feature type="helix" evidence="14">
    <location>
        <begin position="284"/>
        <end position="298"/>
    </location>
</feature>
<feature type="helix" evidence="14">
    <location>
        <begin position="300"/>
        <end position="307"/>
    </location>
</feature>
<feature type="turn" evidence="14">
    <location>
        <begin position="308"/>
        <end position="311"/>
    </location>
</feature>
<feature type="helix" evidence="14">
    <location>
        <begin position="313"/>
        <end position="319"/>
    </location>
</feature>
<sequence length="343" mass="37431">MWPNGSSLGPCFRPTNITLEERRLIASPWFAASFCVVGLASNLLALSVLAGARQGGSHTRSSFLTFLCGLVLTDFLGLLVTGTIVVSQHAALFEWHAVDPGCRLCRFMGVVMIFFGLSPLLLGAAMASERYLGITRPFSRPAVASQRRAWATVGLVWAAALALGLLPLLGVGRYTVQYPGSWCFLTLGAESGDVAFGLLFSMLGGLSVGLSFLLNTVSVATLCHVYHGQEAAQQRPRDSEVEMMAQLLGIMVVASVCWLPLLVFIAQTVLRNPPAMSPAGQLSRTTEKELLIYLRVATWNQILDPWVYILFRRAVLRRLQPRLSTRPRSLSLQPQLTQRSGLQ</sequence>
<dbReference type="EMBL" id="D38081">
    <property type="protein sequence ID" value="BAA07274.1"/>
    <property type="molecule type" value="mRNA"/>
</dbReference>
<dbReference type="EMBL" id="D15056">
    <property type="protein sequence ID" value="BAA03649.1"/>
    <property type="molecule type" value="Genomic_DNA"/>
</dbReference>
<dbReference type="EMBL" id="U11271">
    <property type="protein sequence ID" value="AAA58957.1"/>
    <property type="status" value="ALT_FRAME"/>
    <property type="molecule type" value="mRNA"/>
</dbReference>
<dbReference type="EMBL" id="U27325">
    <property type="protein sequence ID" value="AAA68608.1"/>
    <property type="molecule type" value="mRNA"/>
</dbReference>
<dbReference type="EMBL" id="AY429110">
    <property type="protein sequence ID" value="AAR07905.1"/>
    <property type="molecule type" value="mRNA"/>
</dbReference>
<dbReference type="EMBL" id="DQ268653">
    <property type="protein sequence ID" value="ABB72549.1"/>
    <property type="molecule type" value="Genomic_DNA"/>
</dbReference>
<dbReference type="EMBL" id="AC005175">
    <property type="protein sequence ID" value="AAC24302.1"/>
    <property type="molecule type" value="Genomic_DNA"/>
</dbReference>
<dbReference type="EMBL" id="AC005175">
    <property type="protein sequence ID" value="AAC24303.1"/>
    <property type="molecule type" value="Genomic_DNA"/>
</dbReference>
<dbReference type="EMBL" id="CH471139">
    <property type="protein sequence ID" value="EAW69301.1"/>
    <property type="molecule type" value="Genomic_DNA"/>
</dbReference>
<dbReference type="EMBL" id="BC074749">
    <property type="protein sequence ID" value="AAH74749.1"/>
    <property type="molecule type" value="mRNA"/>
</dbReference>
<dbReference type="EMBL" id="BC074750">
    <property type="protein sequence ID" value="AAH74750.1"/>
    <property type="molecule type" value="mRNA"/>
</dbReference>
<dbReference type="CCDS" id="CCDS42467.1">
    <molecule id="P21731-3"/>
</dbReference>
<dbReference type="CCDS" id="CCDS54198.1">
    <molecule id="P21731-2"/>
</dbReference>
<dbReference type="PIR" id="A49117">
    <property type="entry name" value="A49117"/>
</dbReference>
<dbReference type="PIR" id="A53959">
    <property type="entry name" value="A53959"/>
</dbReference>
<dbReference type="PIR" id="A56194">
    <property type="entry name" value="A56194"/>
</dbReference>
<dbReference type="PIR" id="T02670">
    <property type="entry name" value="T02670"/>
</dbReference>
<dbReference type="RefSeq" id="NP_001051.1">
    <molecule id="P21731-3"/>
    <property type="nucleotide sequence ID" value="NM_001060.6"/>
</dbReference>
<dbReference type="RefSeq" id="NP_963998.2">
    <molecule id="P21731-2"/>
    <property type="nucleotide sequence ID" value="NM_201636.3"/>
</dbReference>
<dbReference type="RefSeq" id="XP_011526516.1">
    <molecule id="P21731-3"/>
    <property type="nucleotide sequence ID" value="XM_011528214.3"/>
</dbReference>
<dbReference type="RefSeq" id="XP_054177825.1">
    <molecule id="P21731-2"/>
    <property type="nucleotide sequence ID" value="XM_054321850.1"/>
</dbReference>
<dbReference type="PDB" id="8XJN">
    <property type="method" value="EM"/>
    <property type="resolution" value="3.06 A"/>
    <property type="chains" value="R=1-331"/>
</dbReference>
<dbReference type="PDB" id="8XJO">
    <property type="method" value="EM"/>
    <property type="resolution" value="3.11 A"/>
    <property type="chains" value="R=1-331"/>
</dbReference>
<dbReference type="PDBsum" id="8XJN"/>
<dbReference type="PDBsum" id="8XJO"/>
<dbReference type="BMRB" id="P21731"/>
<dbReference type="EMDB" id="EMD-38402"/>
<dbReference type="EMDB" id="EMD-38403"/>
<dbReference type="SMR" id="P21731"/>
<dbReference type="BioGRID" id="112777">
    <property type="interactions" value="79"/>
</dbReference>
<dbReference type="CORUM" id="P21731"/>
<dbReference type="DIP" id="DIP-41465N"/>
<dbReference type="FunCoup" id="P21731">
    <property type="interactions" value="890"/>
</dbReference>
<dbReference type="IntAct" id="P21731">
    <property type="interactions" value="26"/>
</dbReference>
<dbReference type="MINT" id="P21731"/>
<dbReference type="STRING" id="9606.ENSP00000393333"/>
<dbReference type="BindingDB" id="P21731"/>
<dbReference type="ChEMBL" id="CHEMBL2069"/>
<dbReference type="DrugBank" id="DB00770">
    <property type="generic name" value="Alprostadil"/>
</dbReference>
<dbReference type="DrugBank" id="DB11507">
    <property type="generic name" value="Cloprostenol"/>
</dbReference>
<dbReference type="DrugBank" id="DB12789">
    <property type="generic name" value="Dinoprost"/>
</dbReference>
<dbReference type="DrugBank" id="DB11519">
    <property type="generic name" value="Fluprostenol"/>
</dbReference>
<dbReference type="DrugBank" id="DB12321">
    <property type="generic name" value="Ifetroban"/>
</dbReference>
<dbReference type="DrugBank" id="DB11629">
    <property type="generic name" value="Laropiprant"/>
</dbReference>
<dbReference type="DrugBank" id="DB09285">
    <property type="generic name" value="Morniflumate"/>
</dbReference>
<dbReference type="DrugBank" id="DB13036">
    <property type="generic name" value="Ramatroban"/>
</dbReference>
<dbReference type="DrugBank" id="DB01207">
    <property type="generic name" value="Ridogrel"/>
</dbReference>
<dbReference type="DrugBank" id="DB06739">
    <property type="generic name" value="Seratrodast"/>
</dbReference>
<dbReference type="DrugBank" id="DB12204">
    <property type="generic name" value="Terbogrel"/>
</dbReference>
<dbReference type="DrugCentral" id="P21731"/>
<dbReference type="GuidetoPHARMACOLOGY" id="346"/>
<dbReference type="GlyCosmos" id="P21731">
    <property type="glycosylation" value="2 sites, No reported glycans"/>
</dbReference>
<dbReference type="GlyGen" id="P21731">
    <property type="glycosylation" value="2 sites, 1 N-linked glycan (1 site)"/>
</dbReference>
<dbReference type="iPTMnet" id="P21731"/>
<dbReference type="PhosphoSitePlus" id="P21731"/>
<dbReference type="SwissPalm" id="P21731"/>
<dbReference type="BioMuta" id="TBXA2R"/>
<dbReference type="DMDM" id="229463010"/>
<dbReference type="jPOST" id="P21731"/>
<dbReference type="MassIVE" id="P21731"/>
<dbReference type="PaxDb" id="9606-ENSP00000393333"/>
<dbReference type="PeptideAtlas" id="P21731"/>
<dbReference type="ProteomicsDB" id="53894">
    <molecule id="P21731-3"/>
</dbReference>
<dbReference type="ProteomicsDB" id="53895">
    <molecule id="P21731-2"/>
</dbReference>
<dbReference type="Antibodypedia" id="5899">
    <property type="antibodies" value="190 antibodies from 29 providers"/>
</dbReference>
<dbReference type="DNASU" id="6915"/>
<dbReference type="Ensembl" id="ENST00000375190.10">
    <molecule id="P21731-3"/>
    <property type="protein sequence ID" value="ENSP00000364336.4"/>
    <property type="gene ID" value="ENSG00000006638.13"/>
</dbReference>
<dbReference type="Ensembl" id="ENST00000411851.3">
    <molecule id="P21731-2"/>
    <property type="protein sequence ID" value="ENSP00000393333.2"/>
    <property type="gene ID" value="ENSG00000006638.13"/>
</dbReference>
<dbReference type="GeneID" id="6915"/>
<dbReference type="KEGG" id="hsa:6915"/>
<dbReference type="MANE-Select" id="ENST00000375190.10">
    <property type="protein sequence ID" value="ENSP00000364336.4"/>
    <property type="RefSeq nucleotide sequence ID" value="NM_001060.6"/>
    <property type="RefSeq protein sequence ID" value="NP_001051.1"/>
</dbReference>
<dbReference type="UCSC" id="uc002lyg.3">
    <molecule id="P21731-3"/>
    <property type="organism name" value="human"/>
</dbReference>
<dbReference type="AGR" id="HGNC:11608"/>
<dbReference type="CTD" id="6915"/>
<dbReference type="DisGeNET" id="6915"/>
<dbReference type="GeneCards" id="TBXA2R"/>
<dbReference type="HGNC" id="HGNC:11608">
    <property type="gene designation" value="TBXA2R"/>
</dbReference>
<dbReference type="HPA" id="ENSG00000006638">
    <property type="expression patterns" value="Low tissue specificity"/>
</dbReference>
<dbReference type="MalaCards" id="TBXA2R"/>
<dbReference type="MIM" id="188070">
    <property type="type" value="gene"/>
</dbReference>
<dbReference type="MIM" id="614009">
    <property type="type" value="phenotype"/>
</dbReference>
<dbReference type="neXtProt" id="NX_P21731"/>
<dbReference type="OpenTargets" id="ENSG00000006638"/>
<dbReference type="Orphanet" id="220443">
    <property type="disease" value="Bleeding diathesis due to thromboxane synthesis deficiency"/>
</dbReference>
<dbReference type="PharmGKB" id="PA348"/>
<dbReference type="VEuPathDB" id="HostDB:ENSG00000006638"/>
<dbReference type="eggNOG" id="KOG3656">
    <property type="taxonomic scope" value="Eukaryota"/>
</dbReference>
<dbReference type="GeneTree" id="ENSGT01030000234559"/>
<dbReference type="HOGENOM" id="CLU_045991_3_0_1"/>
<dbReference type="InParanoid" id="P21731"/>
<dbReference type="OMA" id="HAILFDW"/>
<dbReference type="OrthoDB" id="8631411at2759"/>
<dbReference type="PAN-GO" id="P21731">
    <property type="GO annotations" value="7 GO annotations based on evolutionary models"/>
</dbReference>
<dbReference type="PhylomeDB" id="P21731"/>
<dbReference type="TreeFam" id="TF324982"/>
<dbReference type="PathwayCommons" id="P21731"/>
<dbReference type="Reactome" id="R-HSA-391908">
    <property type="pathway name" value="Prostanoid ligand receptors"/>
</dbReference>
<dbReference type="Reactome" id="R-HSA-416476">
    <property type="pathway name" value="G alpha (q) signalling events"/>
</dbReference>
<dbReference type="Reactome" id="R-HSA-416482">
    <property type="pathway name" value="G alpha (12/13) signalling events"/>
</dbReference>
<dbReference type="Reactome" id="R-HSA-428930">
    <property type="pathway name" value="Thromboxane signalling through TP receptor"/>
</dbReference>
<dbReference type="SignaLink" id="P21731"/>
<dbReference type="SIGNOR" id="P21731"/>
<dbReference type="BioGRID-ORCS" id="6915">
    <property type="hits" value="17 hits in 1164 CRISPR screens"/>
</dbReference>
<dbReference type="ChiTaRS" id="TBXA2R">
    <property type="organism name" value="human"/>
</dbReference>
<dbReference type="GeneWiki" id="Thromboxane_receptor"/>
<dbReference type="GenomeRNAi" id="6915"/>
<dbReference type="Pharos" id="P21731">
    <property type="development level" value="Tclin"/>
</dbReference>
<dbReference type="PRO" id="PR:P21731"/>
<dbReference type="Proteomes" id="UP000005640">
    <property type="component" value="Chromosome 19"/>
</dbReference>
<dbReference type="RNAct" id="P21731">
    <property type="molecule type" value="protein"/>
</dbReference>
<dbReference type="Bgee" id="ENSG00000006638">
    <property type="expression patterns" value="Expressed in tendon of biceps brachii and 189 other cell types or tissues"/>
</dbReference>
<dbReference type="ExpressionAtlas" id="P21731">
    <property type="expression patterns" value="baseline and differential"/>
</dbReference>
<dbReference type="GO" id="GO:0001669">
    <property type="term" value="C:acrosomal vesicle"/>
    <property type="evidence" value="ECO:0007669"/>
    <property type="project" value="Ensembl"/>
</dbReference>
<dbReference type="GO" id="GO:0016607">
    <property type="term" value="C:nuclear speck"/>
    <property type="evidence" value="ECO:0000314"/>
    <property type="project" value="HPA"/>
</dbReference>
<dbReference type="GO" id="GO:0005886">
    <property type="term" value="C:plasma membrane"/>
    <property type="evidence" value="ECO:0000314"/>
    <property type="project" value="HPA"/>
</dbReference>
<dbReference type="GO" id="GO:0005085">
    <property type="term" value="F:guanyl-nucleotide exchange factor activity"/>
    <property type="evidence" value="ECO:0000304"/>
    <property type="project" value="Reactome"/>
</dbReference>
<dbReference type="GO" id="GO:0004961">
    <property type="term" value="F:thromboxane A2 receptor activity"/>
    <property type="evidence" value="ECO:0000304"/>
    <property type="project" value="ProtInc"/>
</dbReference>
<dbReference type="GO" id="GO:0007189">
    <property type="term" value="P:adenylate cyclase-activating G protein-coupled receptor signaling pathway"/>
    <property type="evidence" value="ECO:0000318"/>
    <property type="project" value="GO_Central"/>
</dbReference>
<dbReference type="GO" id="GO:0071222">
    <property type="term" value="P:cellular response to lipopolysaccharide"/>
    <property type="evidence" value="ECO:0007669"/>
    <property type="project" value="Ensembl"/>
</dbReference>
<dbReference type="GO" id="GO:0007186">
    <property type="term" value="P:G protein-coupled receptor signaling pathway"/>
    <property type="evidence" value="ECO:0000304"/>
    <property type="project" value="ProtInc"/>
</dbReference>
<dbReference type="GO" id="GO:0006954">
    <property type="term" value="P:inflammatory response"/>
    <property type="evidence" value="ECO:0000318"/>
    <property type="project" value="GO_Central"/>
</dbReference>
<dbReference type="GO" id="GO:0090051">
    <property type="term" value="P:negative regulation of cell migration involved in sprouting angiogenesis"/>
    <property type="evidence" value="ECO:0000316"/>
    <property type="project" value="BHF-UCL"/>
</dbReference>
<dbReference type="GO" id="GO:0045766">
    <property type="term" value="P:positive regulation of angiogenesis"/>
    <property type="evidence" value="ECO:0007669"/>
    <property type="project" value="Ensembl"/>
</dbReference>
<dbReference type="GO" id="GO:0030194">
    <property type="term" value="P:positive regulation of blood coagulation"/>
    <property type="evidence" value="ECO:0007669"/>
    <property type="project" value="Ensembl"/>
</dbReference>
<dbReference type="GO" id="GO:0045777">
    <property type="term" value="P:positive regulation of blood pressure"/>
    <property type="evidence" value="ECO:0000318"/>
    <property type="project" value="GO_Central"/>
</dbReference>
<dbReference type="GO" id="GO:0007204">
    <property type="term" value="P:positive regulation of cytosolic calcium ion concentration"/>
    <property type="evidence" value="ECO:0000318"/>
    <property type="project" value="GO_Central"/>
</dbReference>
<dbReference type="GO" id="GO:0045987">
    <property type="term" value="P:positive regulation of smooth muscle contraction"/>
    <property type="evidence" value="ECO:0007669"/>
    <property type="project" value="Ensembl"/>
</dbReference>
<dbReference type="GO" id="GO:0045907">
    <property type="term" value="P:positive regulation of vasoconstriction"/>
    <property type="evidence" value="ECO:0000318"/>
    <property type="project" value="GO_Central"/>
</dbReference>
<dbReference type="GO" id="GO:0045471">
    <property type="term" value="P:response to ethanol"/>
    <property type="evidence" value="ECO:0007669"/>
    <property type="project" value="Ensembl"/>
</dbReference>
<dbReference type="GO" id="GO:0007584">
    <property type="term" value="P:response to nutrient"/>
    <property type="evidence" value="ECO:0007669"/>
    <property type="project" value="Ensembl"/>
</dbReference>
<dbReference type="GO" id="GO:0033574">
    <property type="term" value="P:response to testosterone"/>
    <property type="evidence" value="ECO:0007669"/>
    <property type="project" value="Ensembl"/>
</dbReference>
<dbReference type="GO" id="GO:0009410">
    <property type="term" value="P:response to xenobiotic stimulus"/>
    <property type="evidence" value="ECO:0007669"/>
    <property type="project" value="Ensembl"/>
</dbReference>
<dbReference type="GO" id="GO:0006939">
    <property type="term" value="P:smooth muscle contraction"/>
    <property type="evidence" value="ECO:0007669"/>
    <property type="project" value="Ensembl"/>
</dbReference>
<dbReference type="CDD" id="cd15143">
    <property type="entry name" value="7tmA_TXA2_R"/>
    <property type="match status" value="1"/>
</dbReference>
<dbReference type="FunFam" id="1.20.1070.10:FF:000163">
    <property type="entry name" value="Thromboxane A2 receptor"/>
    <property type="match status" value="1"/>
</dbReference>
<dbReference type="Gene3D" id="1.20.1070.10">
    <property type="entry name" value="Rhodopsin 7-helix transmembrane proteins"/>
    <property type="match status" value="1"/>
</dbReference>
<dbReference type="InterPro" id="IPR000276">
    <property type="entry name" value="GPCR_Rhodpsn"/>
</dbReference>
<dbReference type="InterPro" id="IPR017452">
    <property type="entry name" value="GPCR_Rhodpsn_7TM"/>
</dbReference>
<dbReference type="InterPro" id="IPR008365">
    <property type="entry name" value="Prostanoid_rcpt"/>
</dbReference>
<dbReference type="InterPro" id="IPR001105">
    <property type="entry name" value="Thbox_rcpt"/>
</dbReference>
<dbReference type="PANTHER" id="PTHR11866">
    <property type="entry name" value="G-PROTEIN COUPLED RECEPTOR FAMILY 1 MEMBER"/>
    <property type="match status" value="1"/>
</dbReference>
<dbReference type="PANTHER" id="PTHR11866:SF5">
    <property type="entry name" value="THROMBOXANE A2 RECEPTOR"/>
    <property type="match status" value="1"/>
</dbReference>
<dbReference type="Pfam" id="PF00001">
    <property type="entry name" value="7tm_1"/>
    <property type="match status" value="1"/>
</dbReference>
<dbReference type="PRINTS" id="PR00237">
    <property type="entry name" value="GPCRRHODOPSN"/>
</dbReference>
<dbReference type="PRINTS" id="PR01788">
    <property type="entry name" value="PROSTANOIDR"/>
</dbReference>
<dbReference type="PRINTS" id="PR00429">
    <property type="entry name" value="THROMBOXANER"/>
</dbReference>
<dbReference type="SUPFAM" id="SSF81321">
    <property type="entry name" value="Family A G protein-coupled receptor-like"/>
    <property type="match status" value="1"/>
</dbReference>
<dbReference type="PROSITE" id="PS00237">
    <property type="entry name" value="G_PROTEIN_RECEP_F1_1"/>
    <property type="match status" value="1"/>
</dbReference>
<dbReference type="PROSITE" id="PS50262">
    <property type="entry name" value="G_PROTEIN_RECEP_F1_2"/>
    <property type="match status" value="1"/>
</dbReference>
<keyword id="KW-0002">3D-structure</keyword>
<keyword id="KW-0025">Alternative splicing</keyword>
<keyword id="KW-1003">Cell membrane</keyword>
<keyword id="KW-0903">Direct protein sequencing</keyword>
<keyword id="KW-0225">Disease variant</keyword>
<keyword id="KW-1015">Disulfide bond</keyword>
<keyword id="KW-0297">G-protein coupled receptor</keyword>
<keyword id="KW-0325">Glycoprotein</keyword>
<keyword id="KW-0472">Membrane</keyword>
<keyword id="KW-0597">Phosphoprotein</keyword>
<keyword id="KW-1267">Proteomics identification</keyword>
<keyword id="KW-0675">Receptor</keyword>
<keyword id="KW-1185">Reference proteome</keyword>
<keyword id="KW-0807">Transducer</keyword>
<keyword id="KW-0812">Transmembrane</keyword>
<keyword id="KW-1133">Transmembrane helix</keyword>
<name>TA2R_HUMAN</name>
<accession>P21731</accession>
<accession>O75228</accession>
<accession>Q6DK52</accession>
<accession>Q9UCY1</accession>
<accession>Q9UCY2</accession>
<protein>
    <recommendedName>
        <fullName>Thromboxane A2 receptor</fullName>
        <shortName>TXA2-R</shortName>
    </recommendedName>
    <alternativeName>
        <fullName>Prostanoid TP receptor</fullName>
    </alternativeName>
</protein>
<reference key="1">
    <citation type="journal article" date="1991" name="Nature">
        <title>Cloning and expression of cDNA for a human thromboxane A2 receptor.</title>
        <authorList>
            <person name="Hirata M."/>
            <person name="Hayashi Y."/>
            <person name="Ushikubi F."/>
            <person name="Yokota Y."/>
            <person name="Kageyama R."/>
            <person name="Nakanishi S."/>
            <person name="Narumiya S."/>
        </authorList>
    </citation>
    <scope>NUCLEOTIDE SEQUENCE [MRNA] (ISOFORM 1)</scope>
    <scope>PARTIAL PROTEIN SEQUENCE</scope>
    <source>
        <tissue>Placenta</tissue>
    </source>
</reference>
<reference key="2">
    <citation type="journal article" date="1993" name="J. Biol. Chem.">
        <title>Characterization and chromosomal mapping of the human thromboxane A2 receptor gene.</title>
        <authorList>
            <person name="Nuesing R.M."/>
            <person name="Hirata M."/>
            <person name="Kakizuka A."/>
            <person name="Eki T."/>
            <person name="Ozawa K."/>
            <person name="Narumiya S."/>
        </authorList>
    </citation>
    <scope>NUCLEOTIDE SEQUENCE [GENOMIC DNA]</scope>
    <source>
        <tissue>Placenta</tissue>
    </source>
</reference>
<reference key="3">
    <citation type="journal article" date="1994" name="J. Biol. Chem.">
        <title>Alternative splicing produces a divergent cytoplasmic tail in the human endothelial thromboxane A2 receptor.</title>
        <authorList>
            <person name="Raychowdhury M.K."/>
            <person name="Yukawa M."/>
            <person name="Collins L.J."/>
            <person name="McGrail S.H."/>
            <person name="Kent K.C."/>
            <person name="Ware J.A."/>
        </authorList>
    </citation>
    <scope>NUCLEOTIDE SEQUENCE [MRNA] (ISOFORMS 1 AND 2)</scope>
    <scope>ALTERNATIVE SPLICING</scope>
    <source>
        <tissue>Umbilical vein endothelial cell</tissue>
    </source>
</reference>
<reference key="4">
    <citation type="journal article" date="1995" name="J. Biol. Chem.">
        <authorList>
            <person name="Raychowdhury M.K."/>
            <person name="Yukawa M."/>
            <person name="Collins L.J."/>
            <person name="McGrail S.H."/>
            <person name="Kent K.C."/>
            <person name="Ware J.A."/>
        </authorList>
    </citation>
    <scope>ERRATUM OF PUBMED:8034687</scope>
</reference>
<reference key="5">
    <citation type="journal article" date="1994" name="J. Pharmacol. Exp. Ther.">
        <title>Cloning and pharmacologic characterization of a thromboxane A2 receptor from K562 (human chronic myelogenous leukemia) cells.</title>
        <authorList>
            <person name="D'Angelo D.D."/>
            <person name="Davis M.G."/>
            <person name="Ali S."/>
            <person name="Dorn G.W. II"/>
        </authorList>
    </citation>
    <scope>NUCLEOTIDE SEQUENCE [MRNA] (ISOFORM 1)</scope>
</reference>
<reference key="6">
    <citation type="submission" date="2003-10" db="EMBL/GenBank/DDBJ databases">
        <title>cDNA clones of human proteins involved in signal transduction sequenced by the Guthrie cDNA resource center (www.cdna.org).</title>
        <authorList>
            <person name="Kopatz S.A."/>
            <person name="Aronstam R.S."/>
            <person name="Sharma S.V."/>
        </authorList>
    </citation>
    <scope>NUCLEOTIDE SEQUENCE [LARGE SCALE MRNA] (ISOFORM 1)</scope>
    <source>
        <tissue>Placenta</tissue>
    </source>
</reference>
<reference key="7">
    <citation type="submission" date="2005-10" db="EMBL/GenBank/DDBJ databases">
        <authorList>
            <consortium name="NIEHS SNPs program"/>
        </authorList>
    </citation>
    <scope>NUCLEOTIDE SEQUENCE [GENOMIC DNA]</scope>
</reference>
<reference key="8">
    <citation type="journal article" date="2004" name="Nature">
        <title>The DNA sequence and biology of human chromosome 19.</title>
        <authorList>
            <person name="Grimwood J."/>
            <person name="Gordon L.A."/>
            <person name="Olsen A.S."/>
            <person name="Terry A."/>
            <person name="Schmutz J."/>
            <person name="Lamerdin J.E."/>
            <person name="Hellsten U."/>
            <person name="Goodstein D."/>
            <person name="Couronne O."/>
            <person name="Tran-Gyamfi M."/>
            <person name="Aerts A."/>
            <person name="Altherr M."/>
            <person name="Ashworth L."/>
            <person name="Bajorek E."/>
            <person name="Black S."/>
            <person name="Branscomb E."/>
            <person name="Caenepeel S."/>
            <person name="Carrano A.V."/>
            <person name="Caoile C."/>
            <person name="Chan Y.M."/>
            <person name="Christensen M."/>
            <person name="Cleland C.A."/>
            <person name="Copeland A."/>
            <person name="Dalin E."/>
            <person name="Dehal P."/>
            <person name="Denys M."/>
            <person name="Detter J.C."/>
            <person name="Escobar J."/>
            <person name="Flowers D."/>
            <person name="Fotopulos D."/>
            <person name="Garcia C."/>
            <person name="Georgescu A.M."/>
            <person name="Glavina T."/>
            <person name="Gomez M."/>
            <person name="Gonzales E."/>
            <person name="Groza M."/>
            <person name="Hammon N."/>
            <person name="Hawkins T."/>
            <person name="Haydu L."/>
            <person name="Ho I."/>
            <person name="Huang W."/>
            <person name="Israni S."/>
            <person name="Jett J."/>
            <person name="Kadner K."/>
            <person name="Kimball H."/>
            <person name="Kobayashi A."/>
            <person name="Larionov V."/>
            <person name="Leem S.-H."/>
            <person name="Lopez F."/>
            <person name="Lou Y."/>
            <person name="Lowry S."/>
            <person name="Malfatti S."/>
            <person name="Martinez D."/>
            <person name="McCready P.M."/>
            <person name="Medina C."/>
            <person name="Morgan J."/>
            <person name="Nelson K."/>
            <person name="Nolan M."/>
            <person name="Ovcharenko I."/>
            <person name="Pitluck S."/>
            <person name="Pollard M."/>
            <person name="Popkie A.P."/>
            <person name="Predki P."/>
            <person name="Quan G."/>
            <person name="Ramirez L."/>
            <person name="Rash S."/>
            <person name="Retterer J."/>
            <person name="Rodriguez A."/>
            <person name="Rogers S."/>
            <person name="Salamov A."/>
            <person name="Salazar A."/>
            <person name="She X."/>
            <person name="Smith D."/>
            <person name="Slezak T."/>
            <person name="Solovyev V."/>
            <person name="Thayer N."/>
            <person name="Tice H."/>
            <person name="Tsai M."/>
            <person name="Ustaszewska A."/>
            <person name="Vo N."/>
            <person name="Wagner M."/>
            <person name="Wheeler J."/>
            <person name="Wu K."/>
            <person name="Xie G."/>
            <person name="Yang J."/>
            <person name="Dubchak I."/>
            <person name="Furey T.S."/>
            <person name="DeJong P."/>
            <person name="Dickson M."/>
            <person name="Gordon D."/>
            <person name="Eichler E.E."/>
            <person name="Pennacchio L.A."/>
            <person name="Richardson P."/>
            <person name="Stubbs L."/>
            <person name="Rokhsar D.S."/>
            <person name="Myers R.M."/>
            <person name="Rubin E.M."/>
            <person name="Lucas S.M."/>
        </authorList>
    </citation>
    <scope>NUCLEOTIDE SEQUENCE [LARGE SCALE GENOMIC DNA]</scope>
</reference>
<reference key="9">
    <citation type="submission" date="2005-09" db="EMBL/GenBank/DDBJ databases">
        <authorList>
            <person name="Mural R.J."/>
            <person name="Istrail S."/>
            <person name="Sutton G.G."/>
            <person name="Florea L."/>
            <person name="Halpern A.L."/>
            <person name="Mobarry C.M."/>
            <person name="Lippert R."/>
            <person name="Walenz B."/>
            <person name="Shatkay H."/>
            <person name="Dew I."/>
            <person name="Miller J.R."/>
            <person name="Flanigan M.J."/>
            <person name="Edwards N.J."/>
            <person name="Bolanos R."/>
            <person name="Fasulo D."/>
            <person name="Halldorsson B.V."/>
            <person name="Hannenhalli S."/>
            <person name="Turner R."/>
            <person name="Yooseph S."/>
            <person name="Lu F."/>
            <person name="Nusskern D.R."/>
            <person name="Shue B.C."/>
            <person name="Zheng X.H."/>
            <person name="Zhong F."/>
            <person name="Delcher A.L."/>
            <person name="Huson D.H."/>
            <person name="Kravitz S.A."/>
            <person name="Mouchard L."/>
            <person name="Reinert K."/>
            <person name="Remington K.A."/>
            <person name="Clark A.G."/>
            <person name="Waterman M.S."/>
            <person name="Eichler E.E."/>
            <person name="Adams M.D."/>
            <person name="Hunkapiller M.W."/>
            <person name="Myers E.W."/>
            <person name="Venter J.C."/>
        </authorList>
    </citation>
    <scope>NUCLEOTIDE SEQUENCE [LARGE SCALE GENOMIC DNA]</scope>
</reference>
<reference key="10">
    <citation type="journal article" date="2004" name="Genome Res.">
        <title>The status, quality, and expansion of the NIH full-length cDNA project: the Mammalian Gene Collection (MGC).</title>
        <authorList>
            <consortium name="The MGC Project Team"/>
        </authorList>
    </citation>
    <scope>NUCLEOTIDE SEQUENCE [LARGE SCALE MRNA] (ISOFORM 1)</scope>
    <source>
        <tissue>Lung</tissue>
    </source>
</reference>
<reference key="11">
    <citation type="journal article" date="1996" name="J. Clin. Invest.">
        <title>Two thromboxane A2 receptor isoforms in human platelets. Opposite coupling to adenylyl cyclase with different sensitivity to Arg60 to Leu mutation.</title>
        <authorList>
            <person name="Hirata T."/>
            <person name="Ushikubi F."/>
            <person name="Kakizuka A."/>
            <person name="Okuma M."/>
            <person name="Narumiya S."/>
        </authorList>
    </citation>
    <scope>NUCLEOTIDE SEQUENCE [MRNA] OF 329-343 (ISOFORMS 1 AND 2)</scope>
    <scope>FUNCTION</scope>
    <scope>ALTERNATIVE SPLICING</scope>
    <scope>CHARACTERIZATION OF VARIANT BDPLT13 LEU-60</scope>
    <source>
        <tissue>Platelet</tissue>
    </source>
</reference>
<reference key="12">
    <citation type="journal article" date="1993" name="Mol. Pharmacol.">
        <title>Point mutation in the seventh hydrophobic domain of the human thromboxane A2 receptor allows discrimination between agonist and antagonist binding sites.</title>
        <authorList>
            <person name="Funk C.D."/>
            <person name="Furci L."/>
            <person name="Moran N."/>
            <person name="Fitzgerald G.A."/>
        </authorList>
    </citation>
    <scope>MUTAGENESIS OF LEU-291; ARG-295 AND TRP-299</scope>
</reference>
<reference key="13">
    <citation type="journal article" date="2007" name="Prostaglandins Other Lipid Mediat.">
        <title>Low expression of cell-surface thromboxane A2 receptor beta-isoform through the negative regulation of its membrane traffic by proteasomes.</title>
        <authorList>
            <person name="Sasaki M."/>
            <person name="Sukegawa J."/>
            <person name="Miyosawa K."/>
            <person name="Yanagisawa T."/>
            <person name="Ohkubo S."/>
            <person name="Nakahata N."/>
        </authorList>
    </citation>
    <scope>INTERACTION WITH PSMA3</scope>
</reference>
<reference key="14">
    <citation type="journal article" date="2008" name="Traffic">
        <title>RACK1 regulates the cell surface expression of the G protein-coupled receptor for thromboxane A(2).</title>
        <authorList>
            <person name="Parent A."/>
            <person name="Laroche G."/>
            <person name="Hamelin E."/>
            <person name="Parent J.L."/>
        </authorList>
    </citation>
    <scope>INTERACTION WITH RACK1</scope>
</reference>
<reference key="15">
    <citation type="journal article" date="2009" name="Prostaglandins Other Lipid Mediat.">
        <title>Thromboxane A2-induced signal transduction is negatively regulated by KIAA1005 that directly interacts with thromboxane A2 receptor.</title>
        <authorList>
            <person name="Tokue S."/>
            <person name="Sasaki M."/>
            <person name="Nakahata N."/>
        </authorList>
    </citation>
    <scope>INTERACTION WITH RPGRIP1L</scope>
</reference>
<reference key="16">
    <citation type="journal article" date="2010" name="Sci. Signal.">
        <title>Quantitative phosphoproteomics reveals widespread full phosphorylation site occupancy during mitosis.</title>
        <authorList>
            <person name="Olsen J.V."/>
            <person name="Vermeulen M."/>
            <person name="Santamaria A."/>
            <person name="Kumar C."/>
            <person name="Miller M.L."/>
            <person name="Jensen L.J."/>
            <person name="Gnad F."/>
            <person name="Cox J."/>
            <person name="Jensen T.S."/>
            <person name="Nigg E.A."/>
            <person name="Brunak S."/>
            <person name="Mann M."/>
        </authorList>
    </citation>
    <scope>PHOSPHORYLATION [LARGE SCALE ANALYSIS] AT SER-329</scope>
    <scope>IDENTIFICATION BY MASS SPECTROMETRY [LARGE SCALE ANALYSIS]</scope>
    <source>
        <tissue>Cervix carcinoma</tissue>
    </source>
</reference>
<reference key="17">
    <citation type="journal article" date="2014" name="J. Proteomics">
        <title>An enzyme assisted RP-RPLC approach for in-depth analysis of human liver phosphoproteome.</title>
        <authorList>
            <person name="Bian Y."/>
            <person name="Song C."/>
            <person name="Cheng K."/>
            <person name="Dong M."/>
            <person name="Wang F."/>
            <person name="Huang J."/>
            <person name="Sun D."/>
            <person name="Wang L."/>
            <person name="Ye M."/>
            <person name="Zou H."/>
        </authorList>
    </citation>
    <scope>IDENTIFICATION BY MASS SPECTROMETRY [LARGE SCALE ANALYSIS]</scope>
    <source>
        <tissue>Liver</tissue>
    </source>
</reference>
<reference key="18">
    <citation type="journal article" date="1994" name="J. Clin. Invest.">
        <title>Arg60 to Leu mutation of the human thromboxane A2 receptor in a dominantly inherited bleeding disorder.</title>
        <authorList>
            <person name="Hirata T."/>
            <person name="Kakizuka A."/>
            <person name="Ushikubi F."/>
            <person name="Fuse I."/>
            <person name="Okuma M."/>
            <person name="Narumiya S."/>
        </authorList>
    </citation>
    <scope>VARIANT BDPLT13 LEU-60</scope>
    <scope>CHARACTERIZATION OF VARIANT BDPLT13 LEU-60</scope>
</reference>